<reference key="1">
    <citation type="journal article" date="2002" name="Nature">
        <title>The genome sequence of Schizosaccharomyces pombe.</title>
        <authorList>
            <person name="Wood V."/>
            <person name="Gwilliam R."/>
            <person name="Rajandream M.A."/>
            <person name="Lyne M.H."/>
            <person name="Lyne R."/>
            <person name="Stewart A."/>
            <person name="Sgouros J.G."/>
            <person name="Peat N."/>
            <person name="Hayles J."/>
            <person name="Baker S.G."/>
            <person name="Basham D."/>
            <person name="Bowman S."/>
            <person name="Brooks K."/>
            <person name="Brown D."/>
            <person name="Brown S."/>
            <person name="Chillingworth T."/>
            <person name="Churcher C.M."/>
            <person name="Collins M."/>
            <person name="Connor R."/>
            <person name="Cronin A."/>
            <person name="Davis P."/>
            <person name="Feltwell T."/>
            <person name="Fraser A."/>
            <person name="Gentles S."/>
            <person name="Goble A."/>
            <person name="Hamlin N."/>
            <person name="Harris D.E."/>
            <person name="Hidalgo J."/>
            <person name="Hodgson G."/>
            <person name="Holroyd S."/>
            <person name="Hornsby T."/>
            <person name="Howarth S."/>
            <person name="Huckle E.J."/>
            <person name="Hunt S."/>
            <person name="Jagels K."/>
            <person name="James K.D."/>
            <person name="Jones L."/>
            <person name="Jones M."/>
            <person name="Leather S."/>
            <person name="McDonald S."/>
            <person name="McLean J."/>
            <person name="Mooney P."/>
            <person name="Moule S."/>
            <person name="Mungall K.L."/>
            <person name="Murphy L.D."/>
            <person name="Niblett D."/>
            <person name="Odell C."/>
            <person name="Oliver K."/>
            <person name="O'Neil S."/>
            <person name="Pearson D."/>
            <person name="Quail M.A."/>
            <person name="Rabbinowitsch E."/>
            <person name="Rutherford K.M."/>
            <person name="Rutter S."/>
            <person name="Saunders D."/>
            <person name="Seeger K."/>
            <person name="Sharp S."/>
            <person name="Skelton J."/>
            <person name="Simmonds M.N."/>
            <person name="Squares R."/>
            <person name="Squares S."/>
            <person name="Stevens K."/>
            <person name="Taylor K."/>
            <person name="Taylor R.G."/>
            <person name="Tivey A."/>
            <person name="Walsh S.V."/>
            <person name="Warren T."/>
            <person name="Whitehead S."/>
            <person name="Woodward J.R."/>
            <person name="Volckaert G."/>
            <person name="Aert R."/>
            <person name="Robben J."/>
            <person name="Grymonprez B."/>
            <person name="Weltjens I."/>
            <person name="Vanstreels E."/>
            <person name="Rieger M."/>
            <person name="Schaefer M."/>
            <person name="Mueller-Auer S."/>
            <person name="Gabel C."/>
            <person name="Fuchs M."/>
            <person name="Duesterhoeft A."/>
            <person name="Fritzc C."/>
            <person name="Holzer E."/>
            <person name="Moestl D."/>
            <person name="Hilbert H."/>
            <person name="Borzym K."/>
            <person name="Langer I."/>
            <person name="Beck A."/>
            <person name="Lehrach H."/>
            <person name="Reinhardt R."/>
            <person name="Pohl T.M."/>
            <person name="Eger P."/>
            <person name="Zimmermann W."/>
            <person name="Wedler H."/>
            <person name="Wambutt R."/>
            <person name="Purnelle B."/>
            <person name="Goffeau A."/>
            <person name="Cadieu E."/>
            <person name="Dreano S."/>
            <person name="Gloux S."/>
            <person name="Lelaure V."/>
            <person name="Mottier S."/>
            <person name="Galibert F."/>
            <person name="Aves S.J."/>
            <person name="Xiang Z."/>
            <person name="Hunt C."/>
            <person name="Moore K."/>
            <person name="Hurst S.M."/>
            <person name="Lucas M."/>
            <person name="Rochet M."/>
            <person name="Gaillardin C."/>
            <person name="Tallada V.A."/>
            <person name="Garzon A."/>
            <person name="Thode G."/>
            <person name="Daga R.R."/>
            <person name="Cruzado L."/>
            <person name="Jimenez J."/>
            <person name="Sanchez M."/>
            <person name="del Rey F."/>
            <person name="Benito J."/>
            <person name="Dominguez A."/>
            <person name="Revuelta J.L."/>
            <person name="Moreno S."/>
            <person name="Armstrong J."/>
            <person name="Forsburg S.L."/>
            <person name="Cerutti L."/>
            <person name="Lowe T."/>
            <person name="McCombie W.R."/>
            <person name="Paulsen I."/>
            <person name="Potashkin J."/>
            <person name="Shpakovski G.V."/>
            <person name="Ussery D."/>
            <person name="Barrell B.G."/>
            <person name="Nurse P."/>
        </authorList>
    </citation>
    <scope>NUCLEOTIDE SEQUENCE [LARGE SCALE GENOMIC DNA]</scope>
    <source>
        <strain>972 / ATCC 24843</strain>
    </source>
</reference>
<dbReference type="EMBL" id="CU329670">
    <property type="protein sequence ID" value="CAB11489.1"/>
    <property type="molecule type" value="Genomic_DNA"/>
</dbReference>
<dbReference type="PIR" id="T39228">
    <property type="entry name" value="T39228"/>
</dbReference>
<dbReference type="SMR" id="O14301"/>
<dbReference type="BioGRID" id="279243">
    <property type="interactions" value="32"/>
</dbReference>
<dbReference type="FunCoup" id="O14301">
    <property type="interactions" value="268"/>
</dbReference>
<dbReference type="IntAct" id="O14301">
    <property type="interactions" value="1"/>
</dbReference>
<dbReference type="STRING" id="284812.O14301"/>
<dbReference type="iPTMnet" id="O14301"/>
<dbReference type="PaxDb" id="4896-SPAC9G1.05.1"/>
<dbReference type="EnsemblFungi" id="SPAC9G1.05.1">
    <property type="protein sequence ID" value="SPAC9G1.05.1:pep"/>
    <property type="gene ID" value="SPAC9G1.05"/>
</dbReference>
<dbReference type="KEGG" id="spo:2542795"/>
<dbReference type="PomBase" id="SPAC9G1.05"/>
<dbReference type="VEuPathDB" id="FungiDB:SPAC9G1.05"/>
<dbReference type="eggNOG" id="KOG0318">
    <property type="taxonomic scope" value="Eukaryota"/>
</dbReference>
<dbReference type="HOGENOM" id="CLU_015246_1_0_1"/>
<dbReference type="InParanoid" id="O14301"/>
<dbReference type="OMA" id="FYQGPPF"/>
<dbReference type="PhylomeDB" id="O14301"/>
<dbReference type="Reactome" id="R-SPO-114608">
    <property type="pathway name" value="Platelet degranulation"/>
</dbReference>
<dbReference type="PRO" id="PR:O14301"/>
<dbReference type="Proteomes" id="UP000002485">
    <property type="component" value="Chromosome I"/>
</dbReference>
<dbReference type="GO" id="GO:0030479">
    <property type="term" value="C:actin cortical patch"/>
    <property type="evidence" value="ECO:0000266"/>
    <property type="project" value="PomBase"/>
</dbReference>
<dbReference type="GO" id="GO:0032153">
    <property type="term" value="C:cell division site"/>
    <property type="evidence" value="ECO:0007005"/>
    <property type="project" value="PomBase"/>
</dbReference>
<dbReference type="GO" id="GO:0051286">
    <property type="term" value="C:cell tip"/>
    <property type="evidence" value="ECO:0007005"/>
    <property type="project" value="PomBase"/>
</dbReference>
<dbReference type="GO" id="GO:0030864">
    <property type="term" value="C:cortical actin cytoskeleton"/>
    <property type="evidence" value="ECO:0000318"/>
    <property type="project" value="GO_Central"/>
</dbReference>
<dbReference type="GO" id="GO:0005829">
    <property type="term" value="C:cytosol"/>
    <property type="evidence" value="ECO:0007005"/>
    <property type="project" value="PomBase"/>
</dbReference>
<dbReference type="GO" id="GO:0005634">
    <property type="term" value="C:nucleus"/>
    <property type="evidence" value="ECO:0007005"/>
    <property type="project" value="PomBase"/>
</dbReference>
<dbReference type="GO" id="GO:0051015">
    <property type="term" value="F:actin filament binding"/>
    <property type="evidence" value="ECO:0000318"/>
    <property type="project" value="GO_Central"/>
</dbReference>
<dbReference type="GO" id="GO:0003786">
    <property type="term" value="F:actin lateral binding"/>
    <property type="evidence" value="ECO:0000353"/>
    <property type="project" value="PomBase"/>
</dbReference>
<dbReference type="GO" id="GO:0030042">
    <property type="term" value="P:actin filament depolymerization"/>
    <property type="evidence" value="ECO:0000318"/>
    <property type="project" value="GO_Central"/>
</dbReference>
<dbReference type="GO" id="GO:0051014">
    <property type="term" value="P:actin filament severing"/>
    <property type="evidence" value="ECO:0000314"/>
    <property type="project" value="PomBase"/>
</dbReference>
<dbReference type="CDD" id="cd00200">
    <property type="entry name" value="WD40"/>
    <property type="match status" value="1"/>
</dbReference>
<dbReference type="FunFam" id="2.130.10.10:FF:000102">
    <property type="entry name" value="Actin-interacting protein 1"/>
    <property type="match status" value="1"/>
</dbReference>
<dbReference type="FunFam" id="2.130.10.10:FF:000167">
    <property type="entry name" value="Actin-interacting protein 1"/>
    <property type="match status" value="1"/>
</dbReference>
<dbReference type="Gene3D" id="2.130.10.10">
    <property type="entry name" value="YVTN repeat-like/Quinoprotein amine dehydrogenase"/>
    <property type="match status" value="2"/>
</dbReference>
<dbReference type="InterPro" id="IPR015943">
    <property type="entry name" value="WD40/YVTN_repeat-like_dom_sf"/>
</dbReference>
<dbReference type="InterPro" id="IPR036322">
    <property type="entry name" value="WD40_repeat_dom_sf"/>
</dbReference>
<dbReference type="InterPro" id="IPR001680">
    <property type="entry name" value="WD40_rpt"/>
</dbReference>
<dbReference type="PANTHER" id="PTHR19856:SF0">
    <property type="entry name" value="WD REPEAT-CONTAINING PROTEIN 1"/>
    <property type="match status" value="1"/>
</dbReference>
<dbReference type="PANTHER" id="PTHR19856">
    <property type="entry name" value="WD-REPEATCONTAINING PROTEIN WDR1"/>
    <property type="match status" value="1"/>
</dbReference>
<dbReference type="Pfam" id="PF00400">
    <property type="entry name" value="WD40"/>
    <property type="match status" value="8"/>
</dbReference>
<dbReference type="SMART" id="SM00320">
    <property type="entry name" value="WD40"/>
    <property type="match status" value="10"/>
</dbReference>
<dbReference type="SUPFAM" id="SSF50978">
    <property type="entry name" value="WD40 repeat-like"/>
    <property type="match status" value="2"/>
</dbReference>
<dbReference type="PROSITE" id="PS50082">
    <property type="entry name" value="WD_REPEATS_2"/>
    <property type="match status" value="6"/>
</dbReference>
<dbReference type="PROSITE" id="PS50294">
    <property type="entry name" value="WD_REPEATS_REGION"/>
    <property type="match status" value="1"/>
</dbReference>
<evidence type="ECO:0000256" key="1">
    <source>
        <dbReference type="SAM" id="MobiDB-lite"/>
    </source>
</evidence>
<evidence type="ECO:0000305" key="2"/>
<accession>O14301</accession>
<keyword id="KW-1185">Reference proteome</keyword>
<keyword id="KW-0677">Repeat</keyword>
<keyword id="KW-0853">WD repeat</keyword>
<name>YE85_SCHPO</name>
<organism>
    <name type="scientific">Schizosaccharomyces pombe (strain 972 / ATCC 24843)</name>
    <name type="common">Fission yeast</name>
    <dbReference type="NCBI Taxonomy" id="284812"/>
    <lineage>
        <taxon>Eukaryota</taxon>
        <taxon>Fungi</taxon>
        <taxon>Dikarya</taxon>
        <taxon>Ascomycota</taxon>
        <taxon>Taphrinomycotina</taxon>
        <taxon>Schizosaccharomycetes</taxon>
        <taxon>Schizosaccharomycetales</taxon>
        <taxon>Schizosaccharomycetaceae</taxon>
        <taxon>Schizosaccharomyces</taxon>
    </lineage>
</organism>
<comment type="similarity">
    <text evidence="2">Belongs to the WD repeat AIP1 family.</text>
</comment>
<proteinExistence type="inferred from homology"/>
<sequence length="595" mass="65266">MSSQLKSTWAPVPSTKPSQPCKIGTDFKGERIVYPANKAIIIREIEKQENCFQYNEHTAPTTVARFSPSGYYVASGDNQGNVRIWDCAGEDKILKNQVTAISGRITDLDWDGDSQRIIAVGEGKERYGHAFTADSGNSVGEIFGHSSVVNAVSLRKSRPFRAATASDDNSINFFHGTPYRFNRSLRVHSKFVYDVRYSPNDERFASAGADGKVYVFDGKTGDQVYEIDAHKGSIFSISWSPDSSQFVTSSAGYSCKIWDANTGSLIREWLSSDKKQLVGTVWPTKDLIIVVNSKGNLTYLNPSDCKVIDTIYGHQRSITAATLSPDATHFYTASYDGTVLSWDIGKQKAFPLVGESHTNQVMQMIMADDHVITIGMDDTLRVIDIKQGCFAKDNVFPTGYQPIGVCSVEDCLILVTVSDIQVLRSLTGVSTAKTIYQPSAVASHPLKSEFCVGGEDCCVYIHTLEKGELCEVAQCKDSTAPITCLAYSPDGKYLACGDASGKVVLYDANSREVITSRWAFHTGRILGMSWNAKSTHLATASLDTNIHIYSVERPMKYIAMKNAHSLGATQVEWVSENELLSTGSDAAIKVWSVTF</sequence>
<protein>
    <recommendedName>
        <fullName>Uncharacterized WD repeat-containing protein C9G1.05</fullName>
    </recommendedName>
</protein>
<gene>
    <name type="ORF">SPAC9G1.05</name>
</gene>
<feature type="chain" id="PRO_0000051495" description="Uncharacterized WD repeat-containing protein C9G1.05">
    <location>
        <begin position="1"/>
        <end position="595"/>
    </location>
</feature>
<feature type="repeat" description="WD 1">
    <location>
        <begin position="56"/>
        <end position="95"/>
    </location>
</feature>
<feature type="repeat" description="WD 2">
    <location>
        <begin position="100"/>
        <end position="143"/>
    </location>
</feature>
<feature type="repeat" description="WD 3">
    <location>
        <begin position="144"/>
        <end position="184"/>
    </location>
</feature>
<feature type="repeat" description="WD 4">
    <location>
        <begin position="187"/>
        <end position="226"/>
    </location>
</feature>
<feature type="repeat" description="WD 5">
    <location>
        <begin position="229"/>
        <end position="268"/>
    </location>
</feature>
<feature type="repeat" description="WD 6">
    <location>
        <begin position="313"/>
        <end position="352"/>
    </location>
</feature>
<feature type="repeat" description="WD 7">
    <location>
        <begin position="356"/>
        <end position="393"/>
    </location>
</feature>
<feature type="repeat" description="WD 8">
    <location>
        <begin position="433"/>
        <end position="472"/>
    </location>
</feature>
<feature type="repeat" description="WD 9">
    <location>
        <begin position="477"/>
        <end position="516"/>
    </location>
</feature>
<feature type="repeat" description="WD 10">
    <location>
        <begin position="520"/>
        <end position="559"/>
    </location>
</feature>
<feature type="repeat" description="WD 11">
    <location>
        <begin position="564"/>
        <end position="594"/>
    </location>
</feature>
<feature type="region of interest" description="Disordered" evidence="1">
    <location>
        <begin position="1"/>
        <end position="21"/>
    </location>
</feature>